<protein>
    <recommendedName>
        <fullName evidence="1">4-diphosphocytidyl-2-C-methyl-D-erythritol kinase</fullName>
        <shortName evidence="1">CMK</shortName>
        <ecNumber evidence="1">2.7.1.148</ecNumber>
    </recommendedName>
    <alternativeName>
        <fullName evidence="1">4-(cytidine-5'-diphospho)-2-C-methyl-D-erythritol kinase</fullName>
    </alternativeName>
</protein>
<sequence length="286" mass="31380">MQHISVKAFAKINLGLLITGKRQDGYHTLETVFSPINWYDELTFSAADGLGMSCSTIDLPADDSNLCLKAAKALREYAGIDKGVAITLTKRIPFGAGLGGGSSDAATTLRVLNALWELDVPQGDLHGIATGLGADVPYFLETKGLAYATGIGEILEDLEASLPFHIVTVFPGEHISTVWAYRNFYPRFVRQAPDLKQMMKDLCLRSDFSVLPALENDFEPAVFDHYPAVRKVKEQLLEKGGFYASLSGSGSAVFGLFEELRDAENAARFFREHFPVALTEPFFTMQ</sequence>
<comment type="function">
    <text evidence="1">Catalyzes the phosphorylation of the position 2 hydroxy group of 4-diphosphocytidyl-2C-methyl-D-erythritol.</text>
</comment>
<comment type="catalytic activity">
    <reaction evidence="1">
        <text>4-CDP-2-C-methyl-D-erythritol + ATP = 4-CDP-2-C-methyl-D-erythritol 2-phosphate + ADP + H(+)</text>
        <dbReference type="Rhea" id="RHEA:18437"/>
        <dbReference type="ChEBI" id="CHEBI:15378"/>
        <dbReference type="ChEBI" id="CHEBI:30616"/>
        <dbReference type="ChEBI" id="CHEBI:57823"/>
        <dbReference type="ChEBI" id="CHEBI:57919"/>
        <dbReference type="ChEBI" id="CHEBI:456216"/>
        <dbReference type="EC" id="2.7.1.148"/>
    </reaction>
</comment>
<comment type="pathway">
    <text evidence="1">Isoprenoid biosynthesis; isopentenyl diphosphate biosynthesis via DXP pathway; isopentenyl diphosphate from 1-deoxy-D-xylulose 5-phosphate: step 3/6.</text>
</comment>
<comment type="similarity">
    <text evidence="1">Belongs to the GHMP kinase family. IspE subfamily.</text>
</comment>
<proteinExistence type="inferred from homology"/>
<dbReference type="EC" id="2.7.1.148" evidence="1"/>
<dbReference type="EMBL" id="CP001101">
    <property type="protein sequence ID" value="ACE03796.1"/>
    <property type="molecule type" value="Genomic_DNA"/>
</dbReference>
<dbReference type="SMR" id="B3EP19"/>
<dbReference type="STRING" id="331678.Cphamn1_0845"/>
<dbReference type="KEGG" id="cpb:Cphamn1_0845"/>
<dbReference type="eggNOG" id="COG1947">
    <property type="taxonomic scope" value="Bacteria"/>
</dbReference>
<dbReference type="HOGENOM" id="CLU_053057_3_0_10"/>
<dbReference type="OrthoDB" id="9809438at2"/>
<dbReference type="UniPathway" id="UPA00056">
    <property type="reaction ID" value="UER00094"/>
</dbReference>
<dbReference type="GO" id="GO:0050515">
    <property type="term" value="F:4-(cytidine 5'-diphospho)-2-C-methyl-D-erythritol kinase activity"/>
    <property type="evidence" value="ECO:0007669"/>
    <property type="project" value="UniProtKB-UniRule"/>
</dbReference>
<dbReference type="GO" id="GO:0005524">
    <property type="term" value="F:ATP binding"/>
    <property type="evidence" value="ECO:0007669"/>
    <property type="project" value="UniProtKB-UniRule"/>
</dbReference>
<dbReference type="GO" id="GO:0019288">
    <property type="term" value="P:isopentenyl diphosphate biosynthetic process, methylerythritol 4-phosphate pathway"/>
    <property type="evidence" value="ECO:0007669"/>
    <property type="project" value="UniProtKB-UniRule"/>
</dbReference>
<dbReference type="GO" id="GO:0016114">
    <property type="term" value="P:terpenoid biosynthetic process"/>
    <property type="evidence" value="ECO:0007669"/>
    <property type="project" value="InterPro"/>
</dbReference>
<dbReference type="Gene3D" id="3.30.230.10">
    <property type="match status" value="1"/>
</dbReference>
<dbReference type="Gene3D" id="3.30.70.890">
    <property type="entry name" value="GHMP kinase, C-terminal domain"/>
    <property type="match status" value="1"/>
</dbReference>
<dbReference type="HAMAP" id="MF_00061">
    <property type="entry name" value="IspE"/>
    <property type="match status" value="1"/>
</dbReference>
<dbReference type="InterPro" id="IPR013750">
    <property type="entry name" value="GHMP_kinase_C_dom"/>
</dbReference>
<dbReference type="InterPro" id="IPR036554">
    <property type="entry name" value="GHMP_kinase_C_sf"/>
</dbReference>
<dbReference type="InterPro" id="IPR006204">
    <property type="entry name" value="GHMP_kinase_N_dom"/>
</dbReference>
<dbReference type="InterPro" id="IPR004424">
    <property type="entry name" value="IspE"/>
</dbReference>
<dbReference type="InterPro" id="IPR020568">
    <property type="entry name" value="Ribosomal_Su5_D2-typ_SF"/>
</dbReference>
<dbReference type="InterPro" id="IPR014721">
    <property type="entry name" value="Ribsml_uS5_D2-typ_fold_subgr"/>
</dbReference>
<dbReference type="NCBIfam" id="TIGR00154">
    <property type="entry name" value="ispE"/>
    <property type="match status" value="1"/>
</dbReference>
<dbReference type="PANTHER" id="PTHR43527">
    <property type="entry name" value="4-DIPHOSPHOCYTIDYL-2-C-METHYL-D-ERYTHRITOL KINASE, CHLOROPLASTIC"/>
    <property type="match status" value="1"/>
</dbReference>
<dbReference type="PANTHER" id="PTHR43527:SF2">
    <property type="entry name" value="4-DIPHOSPHOCYTIDYL-2-C-METHYL-D-ERYTHRITOL KINASE, CHLOROPLASTIC"/>
    <property type="match status" value="1"/>
</dbReference>
<dbReference type="Pfam" id="PF08544">
    <property type="entry name" value="GHMP_kinases_C"/>
    <property type="match status" value="1"/>
</dbReference>
<dbReference type="Pfam" id="PF00288">
    <property type="entry name" value="GHMP_kinases_N"/>
    <property type="match status" value="1"/>
</dbReference>
<dbReference type="PIRSF" id="PIRSF010376">
    <property type="entry name" value="IspE"/>
    <property type="match status" value="1"/>
</dbReference>
<dbReference type="SUPFAM" id="SSF55060">
    <property type="entry name" value="GHMP Kinase, C-terminal domain"/>
    <property type="match status" value="1"/>
</dbReference>
<dbReference type="SUPFAM" id="SSF54211">
    <property type="entry name" value="Ribosomal protein S5 domain 2-like"/>
    <property type="match status" value="1"/>
</dbReference>
<organism>
    <name type="scientific">Chlorobium phaeobacteroides (strain BS1)</name>
    <dbReference type="NCBI Taxonomy" id="331678"/>
    <lineage>
        <taxon>Bacteria</taxon>
        <taxon>Pseudomonadati</taxon>
        <taxon>Chlorobiota</taxon>
        <taxon>Chlorobiia</taxon>
        <taxon>Chlorobiales</taxon>
        <taxon>Chlorobiaceae</taxon>
        <taxon>Chlorobium/Pelodictyon group</taxon>
        <taxon>Chlorobium</taxon>
    </lineage>
</organism>
<evidence type="ECO:0000255" key="1">
    <source>
        <dbReference type="HAMAP-Rule" id="MF_00061"/>
    </source>
</evidence>
<reference key="1">
    <citation type="submission" date="2008-06" db="EMBL/GenBank/DDBJ databases">
        <title>Complete sequence of Chlorobium phaeobacteroides BS1.</title>
        <authorList>
            <consortium name="US DOE Joint Genome Institute"/>
            <person name="Lucas S."/>
            <person name="Copeland A."/>
            <person name="Lapidus A."/>
            <person name="Glavina del Rio T."/>
            <person name="Dalin E."/>
            <person name="Tice H."/>
            <person name="Bruce D."/>
            <person name="Goodwin L."/>
            <person name="Pitluck S."/>
            <person name="Schmutz J."/>
            <person name="Larimer F."/>
            <person name="Land M."/>
            <person name="Hauser L."/>
            <person name="Kyrpides N."/>
            <person name="Ovchinnikova G."/>
            <person name="Li T."/>
            <person name="Liu Z."/>
            <person name="Zhao F."/>
            <person name="Overmann J."/>
            <person name="Bryant D.A."/>
            <person name="Richardson P."/>
        </authorList>
    </citation>
    <scope>NUCLEOTIDE SEQUENCE [LARGE SCALE GENOMIC DNA]</scope>
    <source>
        <strain>BS1</strain>
    </source>
</reference>
<keyword id="KW-0067">ATP-binding</keyword>
<keyword id="KW-0414">Isoprene biosynthesis</keyword>
<keyword id="KW-0418">Kinase</keyword>
<keyword id="KW-0547">Nucleotide-binding</keyword>
<keyword id="KW-0808">Transferase</keyword>
<gene>
    <name evidence="1" type="primary">ispE</name>
    <name type="ordered locus">Cphamn1_0845</name>
</gene>
<accession>B3EP19</accession>
<feature type="chain" id="PRO_1000092072" description="4-diphosphocytidyl-2-C-methyl-D-erythritol kinase">
    <location>
        <begin position="1"/>
        <end position="286"/>
    </location>
</feature>
<feature type="active site" evidence="1">
    <location>
        <position position="11"/>
    </location>
</feature>
<feature type="active site" evidence="1">
    <location>
        <position position="135"/>
    </location>
</feature>
<feature type="binding site" evidence="1">
    <location>
        <begin position="93"/>
        <end position="103"/>
    </location>
    <ligand>
        <name>ATP</name>
        <dbReference type="ChEBI" id="CHEBI:30616"/>
    </ligand>
</feature>
<name>ISPE_CHLPB</name>